<sequence>MKPLVVFVLGGPGAGKGTQCARIVEKYGYTHLSAGELLRDERKNPDSQYGELIEKYIKEGKIVPVEITISLLKREMDQTMAANAQKNKFLIDGFPRNQDNLQGWNKTMDGKADVSFVLFFDCNNEICIDRCLERGKSSGRSDDNRESLEKRIQTYLESTKPIIDLYEEMGKVKKIDASKSVDEVFGDVMKIFDKEG</sequence>
<dbReference type="EC" id="2.7.4.14" evidence="3"/>
<dbReference type="EC" id="2.7.4.6" evidence="3"/>
<dbReference type="EMBL" id="BC098727">
    <property type="protein sequence ID" value="AAH98727.1"/>
    <property type="status" value="ALT_INIT"/>
    <property type="molecule type" value="mRNA"/>
</dbReference>
<dbReference type="RefSeq" id="NP_001020826.1">
    <property type="nucleotide sequence ID" value="NM_001025655.1"/>
</dbReference>
<dbReference type="SMR" id="Q4KM73"/>
<dbReference type="BioGRID" id="255874">
    <property type="interactions" value="1"/>
</dbReference>
<dbReference type="FunCoup" id="Q4KM73">
    <property type="interactions" value="2552"/>
</dbReference>
<dbReference type="STRING" id="10116.ENSRNOP00000068780"/>
<dbReference type="iPTMnet" id="Q4KM73"/>
<dbReference type="PhosphoSitePlus" id="Q4KM73"/>
<dbReference type="SwissPalm" id="Q4KM73"/>
<dbReference type="jPOST" id="Q4KM73"/>
<dbReference type="PaxDb" id="10116-ENSRNOP00000010318"/>
<dbReference type="PeptideAtlas" id="Q4KM73"/>
<dbReference type="GeneID" id="298410"/>
<dbReference type="KEGG" id="rno:298410"/>
<dbReference type="UCSC" id="RGD:1310116">
    <property type="organism name" value="rat"/>
</dbReference>
<dbReference type="AGR" id="RGD:1310116"/>
<dbReference type="CTD" id="51727"/>
<dbReference type="RGD" id="1310116">
    <property type="gene designation" value="Cmpk1"/>
</dbReference>
<dbReference type="eggNOG" id="KOG3079">
    <property type="taxonomic scope" value="Eukaryota"/>
</dbReference>
<dbReference type="InParanoid" id="Q4KM73"/>
<dbReference type="OrthoDB" id="17675at9989"/>
<dbReference type="PhylomeDB" id="Q4KM73"/>
<dbReference type="TreeFam" id="TF354283"/>
<dbReference type="Reactome" id="R-RNO-499943">
    <property type="pathway name" value="Interconversion of nucleotide di- and triphosphates"/>
</dbReference>
<dbReference type="PRO" id="PR:Q4KM73"/>
<dbReference type="Proteomes" id="UP000002494">
    <property type="component" value="Unplaced"/>
</dbReference>
<dbReference type="GO" id="GO:0005737">
    <property type="term" value="C:cytoplasm"/>
    <property type="evidence" value="ECO:0000318"/>
    <property type="project" value="GO_Central"/>
</dbReference>
<dbReference type="GO" id="GO:0005634">
    <property type="term" value="C:nucleus"/>
    <property type="evidence" value="ECO:0000318"/>
    <property type="project" value="GO_Central"/>
</dbReference>
<dbReference type="GO" id="GO:0004127">
    <property type="term" value="F:(d)CMP kinase activity"/>
    <property type="evidence" value="ECO:0000318"/>
    <property type="project" value="GO_Central"/>
</dbReference>
<dbReference type="GO" id="GO:0005524">
    <property type="term" value="F:ATP binding"/>
    <property type="evidence" value="ECO:0007669"/>
    <property type="project" value="UniProtKB-KW"/>
</dbReference>
<dbReference type="GO" id="GO:0036430">
    <property type="term" value="F:CMP kinase activity"/>
    <property type="evidence" value="ECO:0000314"/>
    <property type="project" value="RGD"/>
</dbReference>
<dbReference type="GO" id="GO:0036431">
    <property type="term" value="F:dCMP kinase activity"/>
    <property type="evidence" value="ECO:0007669"/>
    <property type="project" value="RHEA"/>
</dbReference>
<dbReference type="GO" id="GO:0004550">
    <property type="term" value="F:nucleoside diphosphate kinase activity"/>
    <property type="evidence" value="ECO:0000250"/>
    <property type="project" value="UniProtKB"/>
</dbReference>
<dbReference type="GO" id="GO:0050145">
    <property type="term" value="F:nucleoside monophosphate kinase activity"/>
    <property type="evidence" value="ECO:0000266"/>
    <property type="project" value="RGD"/>
</dbReference>
<dbReference type="GO" id="GO:0033862">
    <property type="term" value="F:UMP kinase activity"/>
    <property type="evidence" value="ECO:0000266"/>
    <property type="project" value="RGD"/>
</dbReference>
<dbReference type="GO" id="GO:0009041">
    <property type="term" value="F:UMP/dUMP kinase activity"/>
    <property type="evidence" value="ECO:0000314"/>
    <property type="project" value="RGD"/>
</dbReference>
<dbReference type="GO" id="GO:0006207">
    <property type="term" value="P:'de novo' pyrimidine nucleobase biosynthetic process"/>
    <property type="evidence" value="ECO:0007669"/>
    <property type="project" value="InterPro"/>
</dbReference>
<dbReference type="GO" id="GO:0046705">
    <property type="term" value="P:CDP biosynthetic process"/>
    <property type="evidence" value="ECO:0000314"/>
    <property type="project" value="RGD"/>
</dbReference>
<dbReference type="GO" id="GO:0006240">
    <property type="term" value="P:dCDP biosynthetic process"/>
    <property type="evidence" value="ECO:0000314"/>
    <property type="project" value="RGD"/>
</dbReference>
<dbReference type="GO" id="GO:0006227">
    <property type="term" value="P:dUDP biosynthetic process"/>
    <property type="evidence" value="ECO:0000314"/>
    <property type="project" value="RGD"/>
</dbReference>
<dbReference type="GO" id="GO:0022602">
    <property type="term" value="P:ovulation cycle process"/>
    <property type="evidence" value="ECO:0000270"/>
    <property type="project" value="RGD"/>
</dbReference>
<dbReference type="GO" id="GO:0018963">
    <property type="term" value="P:phthalate metabolic process"/>
    <property type="evidence" value="ECO:0000270"/>
    <property type="project" value="RGD"/>
</dbReference>
<dbReference type="GO" id="GO:0006225">
    <property type="term" value="P:UDP biosynthetic process"/>
    <property type="evidence" value="ECO:0000314"/>
    <property type="project" value="RGD"/>
</dbReference>
<dbReference type="CDD" id="cd01428">
    <property type="entry name" value="ADK"/>
    <property type="match status" value="1"/>
</dbReference>
<dbReference type="FunFam" id="3.40.50.300:FF:000315">
    <property type="entry name" value="Adenylate kinase 1"/>
    <property type="match status" value="1"/>
</dbReference>
<dbReference type="Gene3D" id="3.40.50.300">
    <property type="entry name" value="P-loop containing nucleotide triphosphate hydrolases"/>
    <property type="match status" value="1"/>
</dbReference>
<dbReference type="HAMAP" id="MF_00235">
    <property type="entry name" value="Adenylate_kinase_Adk"/>
    <property type="match status" value="1"/>
</dbReference>
<dbReference type="HAMAP" id="MF_03172">
    <property type="entry name" value="Adenylate_kinase_UMP_CMP_kin"/>
    <property type="match status" value="1"/>
</dbReference>
<dbReference type="InterPro" id="IPR000850">
    <property type="entry name" value="Adenylat/UMP-CMP_kin"/>
</dbReference>
<dbReference type="InterPro" id="IPR033690">
    <property type="entry name" value="Adenylat_kinase_CS"/>
</dbReference>
<dbReference type="InterPro" id="IPR027417">
    <property type="entry name" value="P-loop_NTPase"/>
</dbReference>
<dbReference type="InterPro" id="IPR006266">
    <property type="entry name" value="UMP_CMP_kinase"/>
</dbReference>
<dbReference type="NCBIfam" id="TIGR01359">
    <property type="entry name" value="UMP_CMP_kin_fam"/>
    <property type="match status" value="1"/>
</dbReference>
<dbReference type="PANTHER" id="PTHR23359">
    <property type="entry name" value="NUCLEOTIDE KINASE"/>
    <property type="match status" value="1"/>
</dbReference>
<dbReference type="Pfam" id="PF00406">
    <property type="entry name" value="ADK"/>
    <property type="match status" value="1"/>
</dbReference>
<dbReference type="PRINTS" id="PR00094">
    <property type="entry name" value="ADENYLTKNASE"/>
</dbReference>
<dbReference type="SUPFAM" id="SSF52540">
    <property type="entry name" value="P-loop containing nucleoside triphosphate hydrolases"/>
    <property type="match status" value="1"/>
</dbReference>
<dbReference type="PROSITE" id="PS00113">
    <property type="entry name" value="ADENYLATE_KINASE"/>
    <property type="match status" value="1"/>
</dbReference>
<reference key="1">
    <citation type="journal article" date="2004" name="Genome Res.">
        <title>The status, quality, and expansion of the NIH full-length cDNA project: the Mammalian Gene Collection (MGC).</title>
        <authorList>
            <consortium name="The MGC Project Team"/>
        </authorList>
    </citation>
    <scope>NUCLEOTIDE SEQUENCE [LARGE SCALE MRNA]</scope>
    <source>
        <tissue>Spleen</tissue>
    </source>
</reference>
<reference key="2">
    <citation type="submission" date="2007-04" db="UniProtKB">
        <authorList>
            <person name="Lubec G."/>
            <person name="Chen W.-Q."/>
        </authorList>
    </citation>
    <scope>PROTEIN SEQUENCE OF 27-39</scope>
    <scope>IDENTIFICATION BY MASS SPECTROMETRY</scope>
    <source>
        <strain>Sprague-Dawley</strain>
        <tissue>Hippocampus</tissue>
    </source>
</reference>
<reference key="3">
    <citation type="journal article" date="2012" name="Nat. Commun.">
        <title>Quantitative maps of protein phosphorylation sites across 14 different rat organs and tissues.</title>
        <authorList>
            <person name="Lundby A."/>
            <person name="Secher A."/>
            <person name="Lage K."/>
            <person name="Nordsborg N.B."/>
            <person name="Dmytriyev A."/>
            <person name="Lundby C."/>
            <person name="Olsen J.V."/>
        </authorList>
    </citation>
    <scope>PHOSPHORYLATION [LARGE SCALE ANALYSIS] AT SER-180</scope>
    <scope>IDENTIFICATION BY MASS SPECTROMETRY [LARGE SCALE ANALYSIS]</scope>
</reference>
<comment type="function">
    <text evidence="3">Catalyzes the phosphorylation of pyrimidine nucleoside monophosphates at the expense of ATP. Plays an important role in de novo pyrimidine nucleotide biosynthesis. Has preference for UMP and CMP as phosphate acceptors. Also displays broad nucleoside diphosphate kinase activity.</text>
</comment>
<comment type="catalytic activity">
    <reaction evidence="3">
        <text>CMP + ATP = CDP + ADP</text>
        <dbReference type="Rhea" id="RHEA:11600"/>
        <dbReference type="ChEBI" id="CHEBI:30616"/>
        <dbReference type="ChEBI" id="CHEBI:58069"/>
        <dbReference type="ChEBI" id="CHEBI:60377"/>
        <dbReference type="ChEBI" id="CHEBI:456216"/>
        <dbReference type="EC" id="2.7.4.14"/>
    </reaction>
</comment>
<comment type="catalytic activity">
    <reaction evidence="3">
        <text>dCMP + ATP = dCDP + ADP</text>
        <dbReference type="Rhea" id="RHEA:25094"/>
        <dbReference type="ChEBI" id="CHEBI:30616"/>
        <dbReference type="ChEBI" id="CHEBI:57566"/>
        <dbReference type="ChEBI" id="CHEBI:58593"/>
        <dbReference type="ChEBI" id="CHEBI:456216"/>
        <dbReference type="EC" id="2.7.4.14"/>
    </reaction>
</comment>
<comment type="catalytic activity">
    <reaction evidence="3">
        <text>UMP + ATP = UDP + ADP</text>
        <dbReference type="Rhea" id="RHEA:24400"/>
        <dbReference type="ChEBI" id="CHEBI:30616"/>
        <dbReference type="ChEBI" id="CHEBI:57865"/>
        <dbReference type="ChEBI" id="CHEBI:58223"/>
        <dbReference type="ChEBI" id="CHEBI:456216"/>
        <dbReference type="EC" id="2.7.4.14"/>
    </reaction>
</comment>
<comment type="catalytic activity">
    <reaction evidence="3">
        <text>a 2'-deoxyribonucleoside 5'-diphosphate + ATP = a 2'-deoxyribonucleoside 5'-triphosphate + ADP</text>
        <dbReference type="Rhea" id="RHEA:44640"/>
        <dbReference type="ChEBI" id="CHEBI:30616"/>
        <dbReference type="ChEBI" id="CHEBI:61560"/>
        <dbReference type="ChEBI" id="CHEBI:73316"/>
        <dbReference type="ChEBI" id="CHEBI:456216"/>
        <dbReference type="EC" id="2.7.4.6"/>
    </reaction>
</comment>
<comment type="catalytic activity">
    <reaction evidence="3">
        <text>a ribonucleoside 5'-diphosphate + ATP = a ribonucleoside 5'-triphosphate + ADP</text>
        <dbReference type="Rhea" id="RHEA:18113"/>
        <dbReference type="ChEBI" id="CHEBI:30616"/>
        <dbReference type="ChEBI" id="CHEBI:57930"/>
        <dbReference type="ChEBI" id="CHEBI:61557"/>
        <dbReference type="ChEBI" id="CHEBI:456216"/>
        <dbReference type="EC" id="2.7.4.6"/>
    </reaction>
</comment>
<comment type="cofactor">
    <cofactor evidence="3">
        <name>Mg(2+)</name>
        <dbReference type="ChEBI" id="CHEBI:18420"/>
    </cofactor>
    <text evidence="3">Binds 1 Mg(2+) ion per monomer.</text>
</comment>
<comment type="subunit">
    <text evidence="3">Monomer.</text>
</comment>
<comment type="subcellular location">
    <subcellularLocation>
        <location evidence="3">Nucleus</location>
    </subcellularLocation>
    <subcellularLocation>
        <location evidence="3">Cytoplasm</location>
    </subcellularLocation>
    <text evidence="3">Predominantly nuclear.</text>
</comment>
<comment type="domain">
    <text evidence="3">Consists of three domains, a large central CORE domain and two small peripheral domains, NMPbind and LID, which undergo movements during catalysis. The LID domain closes over the site of phosphoryl transfer upon ATP binding. Assembling and dissambling the active center during each catalytic cycle provides an effective means to prevent ATP hydrolysis.</text>
</comment>
<comment type="similarity">
    <text evidence="3">Belongs to the adenylate kinase family. UMP-CMP kinase subfamily.</text>
</comment>
<comment type="sequence caution" evidence="4">
    <conflict type="erroneous initiation">
        <sequence resource="EMBL-CDS" id="AAH98727"/>
    </conflict>
</comment>
<proteinExistence type="evidence at protein level"/>
<gene>
    <name type="primary">Cmpk1</name>
    <name type="synonym">Cmpk</name>
</gene>
<keyword id="KW-0007">Acetylation</keyword>
<keyword id="KW-0067">ATP-binding</keyword>
<keyword id="KW-0963">Cytoplasm</keyword>
<keyword id="KW-0903">Direct protein sequencing</keyword>
<keyword id="KW-1017">Isopeptide bond</keyword>
<keyword id="KW-0418">Kinase</keyword>
<keyword id="KW-0547">Nucleotide-binding</keyword>
<keyword id="KW-0539">Nucleus</keyword>
<keyword id="KW-0597">Phosphoprotein</keyword>
<keyword id="KW-0665">Pyrimidine biosynthesis</keyword>
<keyword id="KW-1185">Reference proteome</keyword>
<keyword id="KW-0808">Transferase</keyword>
<keyword id="KW-0832">Ubl conjugation</keyword>
<accession>Q4KM73</accession>
<protein>
    <recommendedName>
        <fullName evidence="3">UMP-CMP kinase</fullName>
        <ecNumber evidence="3">2.7.4.14</ecNumber>
    </recommendedName>
    <alternativeName>
        <fullName evidence="3">Deoxycytidylate kinase</fullName>
        <shortName evidence="3">CK</shortName>
        <shortName evidence="3">dCMP kinase</shortName>
    </alternativeName>
    <alternativeName>
        <fullName evidence="3">Nucleoside-diphosphate kinase</fullName>
        <ecNumber evidence="3">2.7.4.6</ecNumber>
    </alternativeName>
    <alternativeName>
        <fullName evidence="3">Uridine monophosphate/cytidine monophosphate kinase</fullName>
        <shortName evidence="3">UMP/CMP kinase</shortName>
        <shortName evidence="3">UMP/CMPK</shortName>
    </alternativeName>
</protein>
<feature type="chain" id="PRO_0000292951" description="UMP-CMP kinase">
    <location>
        <begin position="1"/>
        <end position="196"/>
    </location>
</feature>
<feature type="region of interest" description="NMP" evidence="3">
    <location>
        <begin position="33"/>
        <end position="63"/>
    </location>
</feature>
<feature type="region of interest" description="LID" evidence="3">
    <location>
        <begin position="133"/>
        <end position="143"/>
    </location>
</feature>
<feature type="binding site" evidence="3">
    <location>
        <begin position="13"/>
        <end position="18"/>
    </location>
    <ligand>
        <name>ATP</name>
        <dbReference type="ChEBI" id="CHEBI:30616"/>
    </ligand>
</feature>
<feature type="binding site" evidence="3">
    <location>
        <position position="39"/>
    </location>
    <ligand>
        <name>a ribonucleoside 5'-phosphate</name>
        <dbReference type="ChEBI" id="CHEBI:58043"/>
    </ligand>
</feature>
<feature type="binding site" evidence="3">
    <location>
        <begin position="61"/>
        <end position="63"/>
    </location>
    <ligand>
        <name>a ribonucleoside 5'-phosphate</name>
        <dbReference type="ChEBI" id="CHEBI:58043"/>
    </ligand>
</feature>
<feature type="binding site" evidence="3">
    <location>
        <begin position="93"/>
        <end position="96"/>
    </location>
    <ligand>
        <name>a ribonucleoside 5'-phosphate</name>
        <dbReference type="ChEBI" id="CHEBI:58043"/>
    </ligand>
</feature>
<feature type="binding site" evidence="3">
    <location>
        <position position="100"/>
    </location>
    <ligand>
        <name>CMP</name>
        <dbReference type="ChEBI" id="CHEBI:60377"/>
    </ligand>
</feature>
<feature type="binding site" evidence="3">
    <location>
        <position position="134"/>
    </location>
    <ligand>
        <name>ATP</name>
        <dbReference type="ChEBI" id="CHEBI:30616"/>
    </ligand>
</feature>
<feature type="binding site" evidence="3">
    <location>
        <position position="140"/>
    </location>
    <ligand>
        <name>a ribonucleoside 5'-phosphate</name>
        <dbReference type="ChEBI" id="CHEBI:58043"/>
    </ligand>
</feature>
<feature type="binding site" evidence="3">
    <location>
        <position position="151"/>
    </location>
    <ligand>
        <name>a ribonucleoside 5'-phosphate</name>
        <dbReference type="ChEBI" id="CHEBI:58043"/>
    </ligand>
</feature>
<feature type="binding site" evidence="3">
    <location>
        <position position="179"/>
    </location>
    <ligand>
        <name>ATP</name>
        <dbReference type="ChEBI" id="CHEBI:30616"/>
    </ligand>
</feature>
<feature type="modified residue" description="Phosphoserine" evidence="1">
    <location>
        <position position="33"/>
    </location>
</feature>
<feature type="modified residue" description="N6-acetyllysine" evidence="2">
    <location>
        <position position="43"/>
    </location>
</feature>
<feature type="modified residue" description="N6-acetyllysine" evidence="1">
    <location>
        <position position="55"/>
    </location>
</feature>
<feature type="modified residue" description="N6-succinyllysine" evidence="2">
    <location>
        <position position="106"/>
    </location>
</feature>
<feature type="modified residue" description="Phosphoserine" evidence="5">
    <location>
        <position position="180"/>
    </location>
</feature>
<feature type="cross-link" description="Glycyl lysine isopeptide (Lys-Gly) (interchain with G-Cter in SUMO2)" evidence="1">
    <location>
        <position position="73"/>
    </location>
</feature>
<evidence type="ECO:0000250" key="1">
    <source>
        <dbReference type="UniProtKB" id="P30085"/>
    </source>
</evidence>
<evidence type="ECO:0000250" key="2">
    <source>
        <dbReference type="UniProtKB" id="Q9DBP5"/>
    </source>
</evidence>
<evidence type="ECO:0000255" key="3">
    <source>
        <dbReference type="HAMAP-Rule" id="MF_03172"/>
    </source>
</evidence>
<evidence type="ECO:0000305" key="4"/>
<evidence type="ECO:0007744" key="5">
    <source>
    </source>
</evidence>
<organism>
    <name type="scientific">Rattus norvegicus</name>
    <name type="common">Rat</name>
    <dbReference type="NCBI Taxonomy" id="10116"/>
    <lineage>
        <taxon>Eukaryota</taxon>
        <taxon>Metazoa</taxon>
        <taxon>Chordata</taxon>
        <taxon>Craniata</taxon>
        <taxon>Vertebrata</taxon>
        <taxon>Euteleostomi</taxon>
        <taxon>Mammalia</taxon>
        <taxon>Eutheria</taxon>
        <taxon>Euarchontoglires</taxon>
        <taxon>Glires</taxon>
        <taxon>Rodentia</taxon>
        <taxon>Myomorpha</taxon>
        <taxon>Muroidea</taxon>
        <taxon>Muridae</taxon>
        <taxon>Murinae</taxon>
        <taxon>Rattus</taxon>
    </lineage>
</organism>
<name>KCY_RAT</name>